<keyword id="KW-0046">Antibiotic resistance</keyword>
<keyword id="KW-1003">Cell membrane</keyword>
<keyword id="KW-0472">Membrane</keyword>
<keyword id="KW-1185">Reference proteome</keyword>
<keyword id="KW-0812">Transmembrane</keyword>
<keyword id="KW-1133">Transmembrane helix</keyword>
<keyword id="KW-0813">Transport</keyword>
<organism>
    <name type="scientific">Mycobacterium tuberculosis (strain CDC 1551 / Oshkosh)</name>
    <dbReference type="NCBI Taxonomy" id="83331"/>
    <lineage>
        <taxon>Bacteria</taxon>
        <taxon>Bacillati</taxon>
        <taxon>Actinomycetota</taxon>
        <taxon>Actinomycetes</taxon>
        <taxon>Mycobacteriales</taxon>
        <taxon>Mycobacteriaceae</taxon>
        <taxon>Mycobacterium</taxon>
        <taxon>Mycobacterium tuberculosis complex</taxon>
    </lineage>
</organism>
<gene>
    <name type="primary">mmr</name>
    <name type="ordered locus">MT3150.1</name>
</gene>
<name>MMR_MYCTO</name>
<evidence type="ECO:0000250" key="1"/>
<evidence type="ECO:0000255" key="2"/>
<evidence type="ECO:0000305" key="3"/>
<protein>
    <recommendedName>
        <fullName>Multidrug resistance protein Mmr</fullName>
    </recommendedName>
</protein>
<accession>P9WGF0</accession>
<accession>L0TE91</accession>
<accession>P69926</accession>
<accession>P95094</accession>
<comment type="function">
    <text evidence="1">Multidrug efflux pump.</text>
</comment>
<comment type="subcellular location">
    <subcellularLocation>
        <location evidence="1">Cell membrane</location>
        <topology evidence="1">Multi-pass membrane protein</topology>
    </subcellularLocation>
</comment>
<comment type="similarity">
    <text evidence="3">Belongs to the drug/metabolite transporter (DMT) superfamily. Small multidrug resistance (SMR) (TC 2.A.7.1) family. Mmr subfamily.</text>
</comment>
<proteinExistence type="inferred from homology"/>
<feature type="chain" id="PRO_0000428373" description="Multidrug resistance protein Mmr">
    <location>
        <begin position="1"/>
        <end position="107"/>
    </location>
</feature>
<feature type="transmembrane region" description="Helical" evidence="2">
    <location>
        <begin position="2"/>
        <end position="19"/>
    </location>
</feature>
<feature type="transmembrane region" description="Helical" evidence="2">
    <location>
        <begin position="29"/>
        <end position="51"/>
    </location>
</feature>
<feature type="transmembrane region" description="Helical" evidence="2">
    <location>
        <begin position="58"/>
        <end position="80"/>
    </location>
</feature>
<feature type="transmembrane region" description="Helical" evidence="2">
    <location>
        <begin position="84"/>
        <end position="106"/>
    </location>
</feature>
<sequence>MIYLYLLCAIFAEVVATSLLKSTEGFTRLWPTVGCLVGYGIAFALLALSISHGMQTDVAYALWSAIGTAAIVLVAVLFLGSPISVMKVVGVGLIVVGVVTLNLAGAH</sequence>
<dbReference type="EMBL" id="AE000516">
    <property type="protein sequence ID" value="AAK47485.1"/>
    <property type="molecule type" value="Genomic_DNA"/>
</dbReference>
<dbReference type="PIR" id="B70650">
    <property type="entry name" value="B70650"/>
</dbReference>
<dbReference type="RefSeq" id="WP_003415995.1">
    <property type="nucleotide sequence ID" value="NZ_KK341227.1"/>
</dbReference>
<dbReference type="SMR" id="P9WGF0"/>
<dbReference type="GeneID" id="45427058"/>
<dbReference type="KEGG" id="mtc:MT3150.1"/>
<dbReference type="PATRIC" id="fig|83331.31.peg.3395"/>
<dbReference type="HOGENOM" id="CLU_133067_0_2_11"/>
<dbReference type="Proteomes" id="UP000001020">
    <property type="component" value="Chromosome"/>
</dbReference>
<dbReference type="GO" id="GO:0005886">
    <property type="term" value="C:plasma membrane"/>
    <property type="evidence" value="ECO:0007669"/>
    <property type="project" value="UniProtKB-SubCell"/>
</dbReference>
<dbReference type="GO" id="GO:0022857">
    <property type="term" value="F:transmembrane transporter activity"/>
    <property type="evidence" value="ECO:0007669"/>
    <property type="project" value="InterPro"/>
</dbReference>
<dbReference type="GO" id="GO:0046677">
    <property type="term" value="P:response to antibiotic"/>
    <property type="evidence" value="ECO:0007669"/>
    <property type="project" value="UniProtKB-KW"/>
</dbReference>
<dbReference type="FunFam" id="1.10.3730.20:FF:000001">
    <property type="entry name" value="Quaternary ammonium compound resistance transporter SugE"/>
    <property type="match status" value="1"/>
</dbReference>
<dbReference type="Gene3D" id="1.10.3730.20">
    <property type="match status" value="1"/>
</dbReference>
<dbReference type="InterPro" id="IPR000390">
    <property type="entry name" value="Small_drug/metabolite_transptr"/>
</dbReference>
<dbReference type="InterPro" id="IPR045324">
    <property type="entry name" value="Small_multidrug_res"/>
</dbReference>
<dbReference type="PANTHER" id="PTHR30561:SF1">
    <property type="entry name" value="MULTIDRUG TRANSPORTER EMRE"/>
    <property type="match status" value="1"/>
</dbReference>
<dbReference type="PANTHER" id="PTHR30561">
    <property type="entry name" value="SMR FAMILY PROTON-DEPENDENT DRUG EFFLUX TRANSPORTER SUGE"/>
    <property type="match status" value="1"/>
</dbReference>
<dbReference type="Pfam" id="PF00893">
    <property type="entry name" value="Multi_Drug_Res"/>
    <property type="match status" value="1"/>
</dbReference>
<dbReference type="SUPFAM" id="SSF103481">
    <property type="entry name" value="Multidrug resistance efflux transporter EmrE"/>
    <property type="match status" value="1"/>
</dbReference>
<reference key="1">
    <citation type="journal article" date="2002" name="J. Bacteriol.">
        <title>Whole-genome comparison of Mycobacterium tuberculosis clinical and laboratory strains.</title>
        <authorList>
            <person name="Fleischmann R.D."/>
            <person name="Alland D."/>
            <person name="Eisen J.A."/>
            <person name="Carpenter L."/>
            <person name="White O."/>
            <person name="Peterson J.D."/>
            <person name="DeBoy R.T."/>
            <person name="Dodson R.J."/>
            <person name="Gwinn M.L."/>
            <person name="Haft D.H."/>
            <person name="Hickey E.K."/>
            <person name="Kolonay J.F."/>
            <person name="Nelson W.C."/>
            <person name="Umayam L.A."/>
            <person name="Ermolaeva M.D."/>
            <person name="Salzberg S.L."/>
            <person name="Delcher A."/>
            <person name="Utterback T.R."/>
            <person name="Weidman J.F."/>
            <person name="Khouri H.M."/>
            <person name="Gill J."/>
            <person name="Mikula A."/>
            <person name="Bishai W."/>
            <person name="Jacobs W.R. Jr."/>
            <person name="Venter J.C."/>
            <person name="Fraser C.M."/>
        </authorList>
    </citation>
    <scope>NUCLEOTIDE SEQUENCE [LARGE SCALE GENOMIC DNA]</scope>
    <source>
        <strain>CDC 1551 / Oshkosh</strain>
    </source>
</reference>